<comment type="function">
    <text>Hemocyanins are copper-containing oxygen carriers occurring freely dissolved in the hemolymph of many mollusks and arthropods.</text>
</comment>
<comment type="subcellular location">
    <subcellularLocation>
        <location>Secreted</location>
        <location>Extracellular space</location>
    </subcellularLocation>
</comment>
<comment type="tissue specificity">
    <text>Hemolymph.</text>
</comment>
<comment type="similarity">
    <text evidence="1">Belongs to the tyrosinase family. Hemocyanin subfamily.</text>
</comment>
<sequence>SGPAQKQNVVNQLLVLIYLYKXDS</sequence>
<keyword id="KW-0186">Copper</keyword>
<keyword id="KW-0903">Direct protein sequencing</keyword>
<keyword id="KW-0561">Oxygen transport</keyword>
<keyword id="KW-0964">Secreted</keyword>
<keyword id="KW-0813">Transport</keyword>
<reference evidence="1" key="1">
    <citation type="journal article" date="1999" name="Comp. Biochem. Physiol.">
        <title>Subunit composition and N-terminal analysis of arthropod hemocyanins.</title>
        <authorList>
            <person name="Stoeva S."/>
            <person name="Dolashka P."/>
            <person name="Hristova R."/>
            <person name="Genov N."/>
            <person name="Voelter W."/>
        </authorList>
    </citation>
    <scope>PROTEIN SEQUENCE</scope>
</reference>
<protein>
    <recommendedName>
        <fullName>Hemocyanin subunit 4e</fullName>
    </recommendedName>
</protein>
<dbReference type="GO" id="GO:0005576">
    <property type="term" value="C:extracellular region"/>
    <property type="evidence" value="ECO:0007669"/>
    <property type="project" value="UniProtKB-SubCell"/>
</dbReference>
<dbReference type="GO" id="GO:0005344">
    <property type="term" value="F:oxygen carrier activity"/>
    <property type="evidence" value="ECO:0007669"/>
    <property type="project" value="UniProtKB-KW"/>
</dbReference>
<proteinExistence type="evidence at protein level"/>
<organism evidence="1">
    <name type="scientific">Maja squinado</name>
    <name type="common">Mediterranean spider crab</name>
    <name type="synonym">Cancer squinado</name>
    <dbReference type="NCBI Taxonomy" id="99391"/>
    <lineage>
        <taxon>Eukaryota</taxon>
        <taxon>Metazoa</taxon>
        <taxon>Ecdysozoa</taxon>
        <taxon>Arthropoda</taxon>
        <taxon>Crustacea</taxon>
        <taxon>Multicrustacea</taxon>
        <taxon>Malacostraca</taxon>
        <taxon>Eumalacostraca</taxon>
        <taxon>Eucarida</taxon>
        <taxon>Decapoda</taxon>
        <taxon>Pleocyemata</taxon>
        <taxon>Brachyura</taxon>
        <taxon>Eubrachyura</taxon>
        <taxon>Majoidea</taxon>
        <taxon>Majidae</taxon>
        <taxon>Maja</taxon>
    </lineage>
</organism>
<name>HCY4E_MAJSQ</name>
<evidence type="ECO:0000305" key="1"/>
<accession>P82306</accession>
<feature type="chain" id="PRO_0000204286" description="Hemocyanin subunit 4e">
    <location>
        <begin position="1"/>
        <end position="24" status="greater than"/>
    </location>
</feature>
<feature type="non-terminal residue" evidence="1">
    <location>
        <position position="24"/>
    </location>
</feature>